<evidence type="ECO:0000250" key="1"/>
<evidence type="ECO:0000250" key="2">
    <source>
        <dbReference type="UniProtKB" id="P01023"/>
    </source>
</evidence>
<evidence type="ECO:0000250" key="3">
    <source>
        <dbReference type="UniProtKB" id="P14046"/>
    </source>
</evidence>
<evidence type="ECO:0000250" key="4">
    <source>
        <dbReference type="UniProtKB" id="P28665"/>
    </source>
</evidence>
<evidence type="ECO:0000255" key="5"/>
<evidence type="ECO:0000305" key="6"/>
<evidence type="ECO:0000312" key="7">
    <source>
        <dbReference type="EMBL" id="CAE51393.1"/>
    </source>
</evidence>
<keyword id="KW-0082">Bait region</keyword>
<keyword id="KW-0903">Direct protein sequencing</keyword>
<keyword id="KW-1015">Disulfide bond</keyword>
<keyword id="KW-0325">Glycoprotein</keyword>
<keyword id="KW-0646">Protease inhibitor</keyword>
<keyword id="KW-1185">Reference proteome</keyword>
<keyword id="KW-0964">Secreted</keyword>
<keyword id="KW-0722">Serine protease inhibitor</keyword>
<keyword id="KW-0732">Signal</keyword>
<keyword id="KW-0882">Thioester bond</keyword>
<reference evidence="6" key="1">
    <citation type="journal article" date="2004" name="Nature">
        <title>Genome sequence of the Brown Norway rat yields insights into mammalian evolution.</title>
        <authorList>
            <person name="Gibbs R.A."/>
            <person name="Weinstock G.M."/>
            <person name="Metzker M.L."/>
            <person name="Muzny D.M."/>
            <person name="Sodergren E.J."/>
            <person name="Scherer S."/>
            <person name="Scott G."/>
            <person name="Steffen D."/>
            <person name="Worley K.C."/>
            <person name="Burch P.E."/>
            <person name="Okwuonu G."/>
            <person name="Hines S."/>
            <person name="Lewis L."/>
            <person name="Deramo C."/>
            <person name="Delgado O."/>
            <person name="Dugan-Rocha S."/>
            <person name="Miner G."/>
            <person name="Morgan M."/>
            <person name="Hawes A."/>
            <person name="Gill R."/>
            <person name="Holt R.A."/>
            <person name="Adams M.D."/>
            <person name="Amanatides P.G."/>
            <person name="Baden-Tillson H."/>
            <person name="Barnstead M."/>
            <person name="Chin S."/>
            <person name="Evans C.A."/>
            <person name="Ferriera S."/>
            <person name="Fosler C."/>
            <person name="Glodek A."/>
            <person name="Gu Z."/>
            <person name="Jennings D."/>
            <person name="Kraft C.L."/>
            <person name="Nguyen T."/>
            <person name="Pfannkoch C.M."/>
            <person name="Sitter C."/>
            <person name="Sutton G.G."/>
            <person name="Venter J.C."/>
            <person name="Woodage T."/>
            <person name="Smith D."/>
            <person name="Lee H.-M."/>
            <person name="Gustafson E."/>
            <person name="Cahill P."/>
            <person name="Kana A."/>
            <person name="Doucette-Stamm L."/>
            <person name="Weinstock K."/>
            <person name="Fechtel K."/>
            <person name="Weiss R.B."/>
            <person name="Dunn D.M."/>
            <person name="Green E.D."/>
            <person name="Blakesley R.W."/>
            <person name="Bouffard G.G."/>
            <person name="De Jong P.J."/>
            <person name="Osoegawa K."/>
            <person name="Zhu B."/>
            <person name="Marra M."/>
            <person name="Schein J."/>
            <person name="Bosdet I."/>
            <person name="Fjell C."/>
            <person name="Jones S."/>
            <person name="Krzywinski M."/>
            <person name="Mathewson C."/>
            <person name="Siddiqui A."/>
            <person name="Wye N."/>
            <person name="McPherson J."/>
            <person name="Zhao S."/>
            <person name="Fraser C.M."/>
            <person name="Shetty J."/>
            <person name="Shatsman S."/>
            <person name="Geer K."/>
            <person name="Chen Y."/>
            <person name="Abramzon S."/>
            <person name="Nierman W.C."/>
            <person name="Havlak P.H."/>
            <person name="Chen R."/>
            <person name="Durbin K.J."/>
            <person name="Egan A."/>
            <person name="Ren Y."/>
            <person name="Song X.-Z."/>
            <person name="Li B."/>
            <person name="Liu Y."/>
            <person name="Qin X."/>
            <person name="Cawley S."/>
            <person name="Cooney A.J."/>
            <person name="D'Souza L.M."/>
            <person name="Martin K."/>
            <person name="Wu J.Q."/>
            <person name="Gonzalez-Garay M.L."/>
            <person name="Jackson A.R."/>
            <person name="Kalafus K.J."/>
            <person name="McLeod M.P."/>
            <person name="Milosavljevic A."/>
            <person name="Virk D."/>
            <person name="Volkov A."/>
            <person name="Wheeler D.A."/>
            <person name="Zhang Z."/>
            <person name="Bailey J.A."/>
            <person name="Eichler E.E."/>
            <person name="Tuzun E."/>
            <person name="Birney E."/>
            <person name="Mongin E."/>
            <person name="Ureta-Vidal A."/>
            <person name="Woodwark C."/>
            <person name="Zdobnov E."/>
            <person name="Bork P."/>
            <person name="Suyama M."/>
            <person name="Torrents D."/>
            <person name="Alexandersson M."/>
            <person name="Trask B.J."/>
            <person name="Young J.M."/>
            <person name="Huang H."/>
            <person name="Wang H."/>
            <person name="Xing H."/>
            <person name="Daniels S."/>
            <person name="Gietzen D."/>
            <person name="Schmidt J."/>
            <person name="Stevens K."/>
            <person name="Vitt U."/>
            <person name="Wingrove J."/>
            <person name="Camara F."/>
            <person name="Mar Alba M."/>
            <person name="Abril J.F."/>
            <person name="Guigo R."/>
            <person name="Smit A."/>
            <person name="Dubchak I."/>
            <person name="Rubin E.M."/>
            <person name="Couronne O."/>
            <person name="Poliakov A."/>
            <person name="Huebner N."/>
            <person name="Ganten D."/>
            <person name="Goesele C."/>
            <person name="Hummel O."/>
            <person name="Kreitler T."/>
            <person name="Lee Y.-A."/>
            <person name="Monti J."/>
            <person name="Schulz H."/>
            <person name="Zimdahl H."/>
            <person name="Himmelbauer H."/>
            <person name="Lehrach H."/>
            <person name="Jacob H.J."/>
            <person name="Bromberg S."/>
            <person name="Gullings-Handley J."/>
            <person name="Jensen-Seaman M.I."/>
            <person name="Kwitek A.E."/>
            <person name="Lazar J."/>
            <person name="Pasko D."/>
            <person name="Tonellato P.J."/>
            <person name="Twigger S."/>
            <person name="Ponting C.P."/>
            <person name="Duarte J.M."/>
            <person name="Rice S."/>
            <person name="Goodstadt L."/>
            <person name="Beatson S.A."/>
            <person name="Emes R.D."/>
            <person name="Winter E.E."/>
            <person name="Webber C."/>
            <person name="Brandt P."/>
            <person name="Nyakatura G."/>
            <person name="Adetobi M."/>
            <person name="Chiaromonte F."/>
            <person name="Elnitski L."/>
            <person name="Eswara P."/>
            <person name="Hardison R.C."/>
            <person name="Hou M."/>
            <person name="Kolbe D."/>
            <person name="Makova K."/>
            <person name="Miller W."/>
            <person name="Nekrutenko A."/>
            <person name="Riemer C."/>
            <person name="Schwartz S."/>
            <person name="Taylor J."/>
            <person name="Yang S."/>
            <person name="Zhang Y."/>
            <person name="Lindpaintner K."/>
            <person name="Andrews T.D."/>
            <person name="Caccamo M."/>
            <person name="Clamp M."/>
            <person name="Clarke L."/>
            <person name="Curwen V."/>
            <person name="Durbin R.M."/>
            <person name="Eyras E."/>
            <person name="Searle S.M."/>
            <person name="Cooper G.M."/>
            <person name="Batzoglou S."/>
            <person name="Brudno M."/>
            <person name="Sidow A."/>
            <person name="Stone E.A."/>
            <person name="Payseur B.A."/>
            <person name="Bourque G."/>
            <person name="Lopez-Otin C."/>
            <person name="Puente X.S."/>
            <person name="Chakrabarti K."/>
            <person name="Chatterji S."/>
            <person name="Dewey C."/>
            <person name="Pachter L."/>
            <person name="Bray N."/>
            <person name="Yap V.B."/>
            <person name="Caspi A."/>
            <person name="Tesler G."/>
            <person name="Pevzner P.A."/>
            <person name="Haussler D."/>
            <person name="Roskin K.M."/>
            <person name="Baertsch R."/>
            <person name="Clawson H."/>
            <person name="Furey T.S."/>
            <person name="Hinrichs A.S."/>
            <person name="Karolchik D."/>
            <person name="Kent W.J."/>
            <person name="Rosenbloom K.R."/>
            <person name="Trumbower H."/>
            <person name="Weirauch M."/>
            <person name="Cooper D.N."/>
            <person name="Stenson P.D."/>
            <person name="Ma B."/>
            <person name="Brent M."/>
            <person name="Arumugam M."/>
            <person name="Shteynberg D."/>
            <person name="Copley R.R."/>
            <person name="Taylor M.S."/>
            <person name="Riethman H."/>
            <person name="Mudunuri U."/>
            <person name="Peterson J."/>
            <person name="Guyer M."/>
            <person name="Felsenfeld A."/>
            <person name="Old S."/>
            <person name="Mockrin S."/>
            <person name="Collins F.S."/>
        </authorList>
    </citation>
    <scope>NUCLEOTIDE SEQUENCE [LARGE SCALE GENOMIC DNA]</scope>
    <source>
        <strain>Brown Norway</strain>
    </source>
</reference>
<reference key="2">
    <citation type="submission" date="2007-07" db="UniProtKB">
        <authorList>
            <person name="Lubec G."/>
            <person name="Kang S.U."/>
        </authorList>
    </citation>
    <scope>PROTEIN SEQUENCE OF 873-878</scope>
    <scope>IDENTIFICATION BY MASS SPECTROMETRY</scope>
    <source>
        <strain>Sprague-Dawley</strain>
        <tissue>Brain</tissue>
    </source>
</reference>
<reference evidence="7" key="3">
    <citation type="journal article" date="2004" name="Genome Res.">
        <title>A genomic analysis of rat proteases and protease inhibitors.</title>
        <authorList>
            <person name="Puente X.S."/>
            <person name="Lopez-Otin C."/>
        </authorList>
    </citation>
    <scope>IDENTIFICATION</scope>
</reference>
<protein>
    <recommendedName>
        <fullName>Murinoglobulin-2</fullName>
    </recommendedName>
</protein>
<accession>Q6IE52</accession>
<sequence>MWKNREAQLCLFSVLLAFLPSASLLFGNSKYMVLVPSQLYTETPEKICLHLYHLNETVTVTASLISQRGTRKLFDEPVVDKDLFHCVSFIPRLPSSEEEESLDINIEGAKHKFSKRHVVLVKNKESVVFVQTDKPMYKPGQSVKFRVVSMDKNLYPLKELVQDPKMNRIMQWQDVKTENGLKQLSFSLSAEPIQGPYKIVVLKQSGVKEEHSFTVMEFVLPRFGVDVKVPNAISVYDEIISVTACDRYTYGKPVLGRVKVRLCHGNPSFSSETKSACKEENSQLDNNGCSTQEVNITEFQLKENYLKVRQAFHVNATVTEEGTGMEFGGYGRIEVERTRNKFLFLKADSHFRHGIPFFVKVRLVDIKGDPIPNEQVFIKAQEAGYTNATTTDQHGLAKFSIDTSSISGYSLNIKVYHKEENLCIHSSCTAERHAEAHHTAYAVYSLSKSYIYLDTEAGVLPCNQIHTVQAHFILKGQVLGVLPQIVFHYLVMAQGSILQTGNHTHQVESGAPVQGNFALEIPVEFSMVPMAKMLIYTILPDGEVIADSVKFQVEKCLRNKVHLSFSPSQSLPASQTHMRVTASPQSLCGLRAVDQSVLLLRPEAELSPSLIYDLPGMQDSNFIPRSHHPFEDEDDCLMYQPRDTEELTYSVPYGREKDVYRYVDMGLTAFTNLKIKHPTYCYDLPKEPPRKDPPRKDPEPKDTVVETIRNYFPETWVWDLVTVSSSGVTEVEMTVPDTITEWKAGALCLSNDTGLGLSSVATLQAFQPFFVELTMPYSVIRGEAFTLKATVMNYLPTSLQMTVQLEASPDFTAVPVGNDQDSYCLGANGRHTSSWLVTPKSLGNVNFSVSVEAQQSPEPCGSEVATVPETGRKDTVIKVLIVEPEGIKKEHTFSSLLCASDAELSETLSLLLPPRVVKDSARAHFSVMGDILSSAIKNTQNLIQMPYGCGEQNMVLFAPNIYVLKYLNETQQLTENIKSKALGYLRAGYQRELNYKHKDGSYSAFGDHNGQGQGNTWLTAFVLKSFAQARAFIFIDESHITDAFTWLSKQQKDSGCFRSSGSLFNNAMKGGVDDEITLSAYITMALLESSLPPVVSKALGCLEASWETIEQGRNGSFVYTKALMAYAFTLAGNQEKRNEILKSLDKEAIKEDNSIHWERPQKPMKSEHYLYTPQASSVEVEMSAYVVLARLTAHPAPSPEDLALSTGTIKWLTKQQNSHGGFSSTQDTVVALDALSKYGAATFSKSQKTPSVTVQSSGSFSQKFQVDKSNRLLLQQVSLPDIPGNYTIRVSGEGCVYAQTTLRYNLPLEKQQPAFALKVKTVPLTCNNPKGQNSFQISLEISYTGSRPASNMVIADVKMLSGFIPLKPTVKKLERLEHVSRTEVTTNNVLLYLDQVTNQTLSFSFIIQQDIPVKNLQPAIVKVYDYYETDEVAFAEYSSPCSSDKQNV</sequence>
<feature type="signal peptide" evidence="5">
    <location>
        <begin position="1"/>
        <end position="24"/>
    </location>
</feature>
<feature type="chain" id="PRO_0000271252" description="Murinoglobulin-2" evidence="5">
    <location>
        <begin position="25"/>
        <end position="1448"/>
    </location>
</feature>
<feature type="region of interest" description="Bait region" evidence="4">
    <location>
        <begin position="678"/>
        <end position="709"/>
    </location>
</feature>
<feature type="glycosylation site" description="N-linked (GlcNAc...) asparagine" evidence="5">
    <location>
        <position position="55"/>
    </location>
</feature>
<feature type="glycosylation site" description="N-linked (GlcNAc...) asparagine" evidence="5">
    <location>
        <position position="295"/>
    </location>
</feature>
<feature type="glycosylation site" description="N-linked (GlcNAc...) asparagine" evidence="5">
    <location>
        <position position="315"/>
    </location>
</feature>
<feature type="glycosylation site" description="N-linked (GlcNAc...) asparagine" evidence="5">
    <location>
        <position position="387"/>
    </location>
</feature>
<feature type="glycosylation site" description="N-linked (GlcNAc...) asparagine" evidence="5">
    <location>
        <position position="502"/>
    </location>
</feature>
<feature type="glycosylation site" description="N-linked (GlcNAc...) asparagine" evidence="5">
    <location>
        <position position="751"/>
    </location>
</feature>
<feature type="glycosylation site" description="N-linked (GlcNAc...) asparagine" evidence="5">
    <location>
        <position position="846"/>
    </location>
</feature>
<feature type="glycosylation site" description="N-linked (GlcNAc...) asparagine" evidence="5">
    <location>
        <position position="968"/>
    </location>
</feature>
<feature type="glycosylation site" description="N-linked (GlcNAc...) asparagine" evidence="5">
    <location>
        <position position="1114"/>
    </location>
</feature>
<feature type="glycosylation site" description="N-linked (GlcNAc...) asparagine" evidence="5">
    <location>
        <position position="1285"/>
    </location>
</feature>
<feature type="glycosylation site" description="N-linked (GlcNAc...) asparagine" evidence="5">
    <location>
        <position position="1398"/>
    </location>
</feature>
<feature type="disulfide bond" evidence="2">
    <location>
        <begin position="48"/>
        <end position="86"/>
    </location>
</feature>
<feature type="disulfide bond" evidence="2">
    <location>
        <begin position="245"/>
        <end position="277"/>
    </location>
</feature>
<feature type="disulfide bond" evidence="2">
    <location>
        <begin position="263"/>
        <end position="289"/>
    </location>
</feature>
<feature type="disulfide bond" evidence="2">
    <location>
        <begin position="462"/>
        <end position="556"/>
    </location>
</feature>
<feature type="disulfide bond" evidence="2">
    <location>
        <begin position="588"/>
        <end position="748"/>
    </location>
</feature>
<feature type="disulfide bond" evidence="2">
    <location>
        <begin position="636"/>
        <end position="681"/>
    </location>
</feature>
<feature type="disulfide bond" evidence="2">
    <location>
        <begin position="824"/>
        <end position="860"/>
    </location>
</feature>
<feature type="disulfide bond" evidence="2">
    <location>
        <begin position="898"/>
        <end position="1295"/>
    </location>
</feature>
<feature type="disulfide bond" evidence="2">
    <location>
        <begin position="1056"/>
        <end position="1101"/>
    </location>
</feature>
<feature type="disulfide bond" evidence="2">
    <location>
        <begin position="1326"/>
        <end position="1441"/>
    </location>
</feature>
<feature type="cross-link" description="Isoglutamyl cysteine thioester (Cys-Gln)" evidence="2">
    <location>
        <begin position="949"/>
        <end position="952"/>
    </location>
</feature>
<dbReference type="EMBL" id="AC113675">
    <property type="status" value="NOT_ANNOTATED_CDS"/>
    <property type="molecule type" value="Genomic_DNA"/>
</dbReference>
<dbReference type="EMBL" id="BN000341">
    <property type="protein sequence ID" value="CAE51393.1"/>
    <property type="molecule type" value="mRNA"/>
</dbReference>
<dbReference type="RefSeq" id="NP_001002826.1">
    <property type="nucleotide sequence ID" value="NM_001002826.1"/>
</dbReference>
<dbReference type="SMR" id="Q6IE52"/>
<dbReference type="FunCoup" id="Q6IE52">
    <property type="interactions" value="4"/>
</dbReference>
<dbReference type="MEROPS" id="I39.004"/>
<dbReference type="CarbonylDB" id="Q6IE52"/>
<dbReference type="GlyCosmos" id="Q6IE52">
    <property type="glycosylation" value="11 sites, No reported glycans"/>
</dbReference>
<dbReference type="GlyGen" id="Q6IE52">
    <property type="glycosylation" value="11 sites"/>
</dbReference>
<dbReference type="iPTMnet" id="Q6IE52"/>
<dbReference type="PhosphoSitePlus" id="Q6IE52"/>
<dbReference type="PeptideAtlas" id="Q6IE52"/>
<dbReference type="UCSC" id="RGD:1302962">
    <property type="organism name" value="rat"/>
</dbReference>
<dbReference type="AGR" id="RGD:1302962"/>
<dbReference type="RGD" id="1302962">
    <property type="gene designation" value="Mug2"/>
</dbReference>
<dbReference type="InParanoid" id="Q6IE52"/>
<dbReference type="PRO" id="PR:Q6IE52"/>
<dbReference type="Proteomes" id="UP000002494">
    <property type="component" value="Unplaced"/>
</dbReference>
<dbReference type="GO" id="GO:0005615">
    <property type="term" value="C:extracellular space"/>
    <property type="evidence" value="ECO:0007669"/>
    <property type="project" value="InterPro"/>
</dbReference>
<dbReference type="GO" id="GO:0004866">
    <property type="term" value="F:endopeptidase inhibitor activity"/>
    <property type="evidence" value="ECO:0000318"/>
    <property type="project" value="GO_Central"/>
</dbReference>
<dbReference type="GO" id="GO:0002020">
    <property type="term" value="F:protease binding"/>
    <property type="evidence" value="ECO:0000318"/>
    <property type="project" value="GO_Central"/>
</dbReference>
<dbReference type="GO" id="GO:0004867">
    <property type="term" value="F:serine-type endopeptidase inhibitor activity"/>
    <property type="evidence" value="ECO:0007669"/>
    <property type="project" value="UniProtKB-KW"/>
</dbReference>
<dbReference type="CDD" id="cd02897">
    <property type="entry name" value="A2M_2"/>
    <property type="match status" value="1"/>
</dbReference>
<dbReference type="FunFam" id="2.60.40.10:FF:000312">
    <property type="entry name" value="Alpha-2-macroglobulin like 1"/>
    <property type="match status" value="1"/>
</dbReference>
<dbReference type="FunFam" id="1.50.10.20:FF:000001">
    <property type="entry name" value="CD109 isoform 1"/>
    <property type="match status" value="1"/>
</dbReference>
<dbReference type="FunFam" id="2.60.40.1930:FF:000001">
    <property type="entry name" value="CD109 isoform 3"/>
    <property type="match status" value="1"/>
</dbReference>
<dbReference type="FunFam" id="2.60.40.10:FF:001760">
    <property type="entry name" value="Murinoglobulin-1"/>
    <property type="match status" value="1"/>
</dbReference>
<dbReference type="FunFam" id="2.60.40.1940:FF:000007">
    <property type="entry name" value="Murinoglobulin-1"/>
    <property type="match status" value="1"/>
</dbReference>
<dbReference type="FunFam" id="2.20.130.20:FF:000004">
    <property type="entry name" value="PZP, alpha-2-macroglobulin like"/>
    <property type="match status" value="1"/>
</dbReference>
<dbReference type="FunFam" id="2.60.40.1930:FF:000002">
    <property type="entry name" value="PZP, alpha-2-macroglobulin like"/>
    <property type="match status" value="1"/>
</dbReference>
<dbReference type="FunFam" id="2.60.40.690:FF:000001">
    <property type="entry name" value="PZP, alpha-2-macroglobulin like"/>
    <property type="match status" value="1"/>
</dbReference>
<dbReference type="Gene3D" id="1.50.10.20">
    <property type="match status" value="1"/>
</dbReference>
<dbReference type="Gene3D" id="2.20.130.20">
    <property type="match status" value="1"/>
</dbReference>
<dbReference type="Gene3D" id="2.60.120.1540">
    <property type="match status" value="1"/>
</dbReference>
<dbReference type="Gene3D" id="2.60.40.1930">
    <property type="match status" value="2"/>
</dbReference>
<dbReference type="Gene3D" id="2.60.40.1940">
    <property type="match status" value="1"/>
</dbReference>
<dbReference type="Gene3D" id="6.20.50.160">
    <property type="match status" value="1"/>
</dbReference>
<dbReference type="Gene3D" id="2.60.40.690">
    <property type="entry name" value="Alpha-macroglobulin, receptor-binding domain"/>
    <property type="match status" value="1"/>
</dbReference>
<dbReference type="Gene3D" id="2.60.40.10">
    <property type="entry name" value="Immunoglobulins"/>
    <property type="match status" value="2"/>
</dbReference>
<dbReference type="InterPro" id="IPR009048">
    <property type="entry name" value="A-macroglobulin_rcpt-bd"/>
</dbReference>
<dbReference type="InterPro" id="IPR036595">
    <property type="entry name" value="A-macroglobulin_rcpt-bd_sf"/>
</dbReference>
<dbReference type="InterPro" id="IPR050473">
    <property type="entry name" value="A2M/Complement_sys"/>
</dbReference>
<dbReference type="InterPro" id="IPR011625">
    <property type="entry name" value="A2M_N_BRD"/>
</dbReference>
<dbReference type="InterPro" id="IPR041813">
    <property type="entry name" value="A2M_TED"/>
</dbReference>
<dbReference type="InterPro" id="IPR047565">
    <property type="entry name" value="Alpha-macroglob_thiol-ester_cl"/>
</dbReference>
<dbReference type="InterPro" id="IPR011626">
    <property type="entry name" value="Alpha-macroglobulin_TED"/>
</dbReference>
<dbReference type="InterPro" id="IPR013783">
    <property type="entry name" value="Ig-like_fold"/>
</dbReference>
<dbReference type="InterPro" id="IPR014756">
    <property type="entry name" value="Ig_E-set"/>
</dbReference>
<dbReference type="InterPro" id="IPR001599">
    <property type="entry name" value="Macroglobln_a2"/>
</dbReference>
<dbReference type="InterPro" id="IPR019742">
    <property type="entry name" value="MacrogloblnA2_CS"/>
</dbReference>
<dbReference type="InterPro" id="IPR002890">
    <property type="entry name" value="MG2"/>
</dbReference>
<dbReference type="InterPro" id="IPR041555">
    <property type="entry name" value="MG3"/>
</dbReference>
<dbReference type="InterPro" id="IPR040839">
    <property type="entry name" value="MG4"/>
</dbReference>
<dbReference type="InterPro" id="IPR008930">
    <property type="entry name" value="Terpenoid_cyclase/PrenylTrfase"/>
</dbReference>
<dbReference type="InterPro" id="IPR010916">
    <property type="entry name" value="TonB_box_CS"/>
</dbReference>
<dbReference type="PANTHER" id="PTHR11412">
    <property type="entry name" value="MACROGLOBULIN / COMPLEMENT"/>
    <property type="match status" value="1"/>
</dbReference>
<dbReference type="PANTHER" id="PTHR11412:SF133">
    <property type="entry name" value="MURINOGLOBULIN-1-RELATED"/>
    <property type="match status" value="1"/>
</dbReference>
<dbReference type="Pfam" id="PF00207">
    <property type="entry name" value="A2M"/>
    <property type="match status" value="1"/>
</dbReference>
<dbReference type="Pfam" id="PF07703">
    <property type="entry name" value="A2M_BRD"/>
    <property type="match status" value="1"/>
</dbReference>
<dbReference type="Pfam" id="PF07677">
    <property type="entry name" value="A2M_recep"/>
    <property type="match status" value="1"/>
</dbReference>
<dbReference type="Pfam" id="PF01835">
    <property type="entry name" value="MG2"/>
    <property type="match status" value="1"/>
</dbReference>
<dbReference type="Pfam" id="PF17791">
    <property type="entry name" value="MG3"/>
    <property type="match status" value="1"/>
</dbReference>
<dbReference type="Pfam" id="PF17789">
    <property type="entry name" value="MG4"/>
    <property type="match status" value="1"/>
</dbReference>
<dbReference type="Pfam" id="PF07678">
    <property type="entry name" value="TED_complement"/>
    <property type="match status" value="1"/>
</dbReference>
<dbReference type="SMART" id="SM01360">
    <property type="entry name" value="A2M"/>
    <property type="match status" value="1"/>
</dbReference>
<dbReference type="SMART" id="SM01359">
    <property type="entry name" value="A2M_N_2"/>
    <property type="match status" value="1"/>
</dbReference>
<dbReference type="SMART" id="SM01361">
    <property type="entry name" value="A2M_recep"/>
    <property type="match status" value="1"/>
</dbReference>
<dbReference type="SMART" id="SM01419">
    <property type="entry name" value="Thiol-ester_cl"/>
    <property type="match status" value="1"/>
</dbReference>
<dbReference type="SUPFAM" id="SSF49410">
    <property type="entry name" value="Alpha-macroglobulin receptor domain"/>
    <property type="match status" value="1"/>
</dbReference>
<dbReference type="SUPFAM" id="SSF81296">
    <property type="entry name" value="E set domains"/>
    <property type="match status" value="1"/>
</dbReference>
<dbReference type="SUPFAM" id="SSF48239">
    <property type="entry name" value="Terpenoid cyclases/Protein prenyltransferases"/>
    <property type="match status" value="1"/>
</dbReference>
<dbReference type="PROSITE" id="PS00477">
    <property type="entry name" value="ALPHA_2_MACROGLOBULIN"/>
    <property type="match status" value="1"/>
</dbReference>
<proteinExistence type="evidence at protein level"/>
<comment type="function">
    <text evidence="6">A proteinase activates the inhibitor by specific proteolysis in the bait region, which, by an unknown mechanism leads to reaction at the cysteinyl-glutamyl internal thiol ester site and to a conformational change, whereby the proteinase is trapped and/or covalently bound to the inhibitor. While in the tetrameric proteinase inhibitors steric inhibition is sufficiently strong, monomeric forms need a covalent linkage between the activated glutamyl residue of the original thiol ester and a terminal amino group of a lysine or another nucleophilic group on the proteinase, for inhibition to be effective.</text>
</comment>
<comment type="subunit">
    <text evidence="3">Monomer.</text>
</comment>
<comment type="subcellular location">
    <subcellularLocation>
        <location evidence="1">Secreted</location>
    </subcellularLocation>
</comment>
<comment type="similarity">
    <text evidence="5">Belongs to the protease inhibitor I39 (alpha-2-macroglobulin) family.</text>
</comment>
<organism>
    <name type="scientific">Rattus norvegicus</name>
    <name type="common">Rat</name>
    <dbReference type="NCBI Taxonomy" id="10116"/>
    <lineage>
        <taxon>Eukaryota</taxon>
        <taxon>Metazoa</taxon>
        <taxon>Chordata</taxon>
        <taxon>Craniata</taxon>
        <taxon>Vertebrata</taxon>
        <taxon>Euteleostomi</taxon>
        <taxon>Mammalia</taxon>
        <taxon>Eutheria</taxon>
        <taxon>Euarchontoglires</taxon>
        <taxon>Glires</taxon>
        <taxon>Rodentia</taxon>
        <taxon>Myomorpha</taxon>
        <taxon>Muroidea</taxon>
        <taxon>Muridae</taxon>
        <taxon>Murinae</taxon>
        <taxon>Rattus</taxon>
    </lineage>
</organism>
<name>MUG2_RAT</name>
<gene>
    <name evidence="7" type="primary">Mug2</name>
</gene>